<sequence>MIFLSQAQIDALLLEDIQGGDLTTRALNIGHQHGYIEFFLRQGGCVSGISVACKMLTTLGLTIDDAVSDGSQANAGQRLIRAQGNAAALHQGWKAVQNVLEWSCGVSDYLAQMLALLRERYPDGNIACTRKAIPGTRLLASQAILAAGGLIHRAGCAETILLFANHRHFLHDNQDWSGAINQLRRHAPEKKIVVEADTPKEAIAALRAQPDVLQLDKFSPQQATEIAQIAPSLAPHCTLALTGGINLTTLKNYLDCGIRLFITSAPYYAAPADIKVSLQPAASI</sequence>
<keyword id="KW-0328">Glycosyltransferase</keyword>
<keyword id="KW-1185">Reference proteome</keyword>
<keyword id="KW-0808">Transferase</keyword>
<proteinExistence type="inferred from homology"/>
<feature type="chain" id="PRO_0000155958" description="Putative pyrophosphorylase ModD">
    <location>
        <begin position="1"/>
        <end position="284"/>
    </location>
</feature>
<feature type="sequence conflict" description="In Ref. 1; AAC61710." evidence="1" ref="1">
    <original>CGVSDYLAQMLALLRERYPDGNI</original>
    <variation>LRLFLIISLKCWRYFVNVTLMAIF</variation>
    <location>
        <begin position="104"/>
        <end position="126"/>
    </location>
</feature>
<comment type="miscellaneous">
    <text>Orthologs of this gene seem to exist only in pathogenic strains of E.coli but not in the K12 strain.</text>
</comment>
<comment type="similarity">
    <text evidence="1">Belongs to the NadC/ModD family.</text>
</comment>
<dbReference type="EC" id="2.4.2.-"/>
<dbReference type="EMBL" id="AF081283">
    <property type="protein sequence ID" value="AAC61710.1"/>
    <property type="molecule type" value="Genomic_DNA"/>
</dbReference>
<dbReference type="EMBL" id="AE014075">
    <property type="protein sequence ID" value="AAN80112.1"/>
    <property type="molecule type" value="Genomic_DNA"/>
</dbReference>
<dbReference type="RefSeq" id="WP_000576827.1">
    <property type="nucleotide sequence ID" value="NZ_CP051263.1"/>
</dbReference>
<dbReference type="SMR" id="P59245"/>
<dbReference type="STRING" id="199310.c1647"/>
<dbReference type="KEGG" id="ecc:c1647"/>
<dbReference type="eggNOG" id="COG0157">
    <property type="taxonomic scope" value="Bacteria"/>
</dbReference>
<dbReference type="HOGENOM" id="CLU_039622_2_1_6"/>
<dbReference type="BioCyc" id="ECOL199310:C1647-MONOMER"/>
<dbReference type="Proteomes" id="UP000001410">
    <property type="component" value="Chromosome"/>
</dbReference>
<dbReference type="GO" id="GO:0005737">
    <property type="term" value="C:cytoplasm"/>
    <property type="evidence" value="ECO:0007669"/>
    <property type="project" value="TreeGrafter"/>
</dbReference>
<dbReference type="GO" id="GO:0004514">
    <property type="term" value="F:nicotinate-nucleotide diphosphorylase (carboxylating) activity"/>
    <property type="evidence" value="ECO:0007669"/>
    <property type="project" value="InterPro"/>
</dbReference>
<dbReference type="GO" id="GO:0009435">
    <property type="term" value="P:NAD biosynthetic process"/>
    <property type="evidence" value="ECO:0007669"/>
    <property type="project" value="InterPro"/>
</dbReference>
<dbReference type="GO" id="GO:0034213">
    <property type="term" value="P:quinolinate catabolic process"/>
    <property type="evidence" value="ECO:0007669"/>
    <property type="project" value="TreeGrafter"/>
</dbReference>
<dbReference type="CDD" id="cd01573">
    <property type="entry name" value="modD_like"/>
    <property type="match status" value="1"/>
</dbReference>
<dbReference type="FunFam" id="3.20.20.70:FF:000030">
    <property type="entry name" value="Nicotinate-nucleotide pyrophosphorylase, carboxylating"/>
    <property type="match status" value="1"/>
</dbReference>
<dbReference type="Gene3D" id="3.20.20.70">
    <property type="entry name" value="Aldolase class I"/>
    <property type="match status" value="1"/>
</dbReference>
<dbReference type="Gene3D" id="3.90.1170.20">
    <property type="entry name" value="Quinolinate phosphoribosyl transferase, N-terminal domain"/>
    <property type="match status" value="1"/>
</dbReference>
<dbReference type="InterPro" id="IPR013785">
    <property type="entry name" value="Aldolase_TIM"/>
</dbReference>
<dbReference type="InterPro" id="IPR006242">
    <property type="entry name" value="ModD"/>
</dbReference>
<dbReference type="InterPro" id="IPR027277">
    <property type="entry name" value="NadC/ModD"/>
</dbReference>
<dbReference type="InterPro" id="IPR036068">
    <property type="entry name" value="Nicotinate_pribotase-like_C"/>
</dbReference>
<dbReference type="InterPro" id="IPR037128">
    <property type="entry name" value="Quinolinate_PRibosylTase_N_sf"/>
</dbReference>
<dbReference type="InterPro" id="IPR002638">
    <property type="entry name" value="Quinolinate_PRibosylTrfase_C"/>
</dbReference>
<dbReference type="InterPro" id="IPR022412">
    <property type="entry name" value="Quinolinate_PRibosylTrfase_N"/>
</dbReference>
<dbReference type="NCBIfam" id="TIGR01334">
    <property type="entry name" value="modD"/>
    <property type="match status" value="1"/>
</dbReference>
<dbReference type="PANTHER" id="PTHR32179">
    <property type="entry name" value="NICOTINATE-NUCLEOTIDE PYROPHOSPHORYLASE [CARBOXYLATING]"/>
    <property type="match status" value="1"/>
</dbReference>
<dbReference type="PANTHER" id="PTHR32179:SF4">
    <property type="entry name" value="PYROPHOSPHORYLASE MODD-RELATED"/>
    <property type="match status" value="1"/>
</dbReference>
<dbReference type="Pfam" id="PF01729">
    <property type="entry name" value="QRPTase_C"/>
    <property type="match status" value="1"/>
</dbReference>
<dbReference type="Pfam" id="PF02749">
    <property type="entry name" value="QRPTase_N"/>
    <property type="match status" value="1"/>
</dbReference>
<dbReference type="PIRSF" id="PIRSF006250">
    <property type="entry name" value="NadC_ModD"/>
    <property type="match status" value="1"/>
</dbReference>
<dbReference type="SUPFAM" id="SSF51690">
    <property type="entry name" value="Nicotinate/Quinolinate PRTase C-terminal domain-like"/>
    <property type="match status" value="1"/>
</dbReference>
<dbReference type="SUPFAM" id="SSF54675">
    <property type="entry name" value="Nicotinate/Quinolinate PRTase N-terminal domain-like"/>
    <property type="match status" value="1"/>
</dbReference>
<evidence type="ECO:0000305" key="1"/>
<gene>
    <name type="primary">modD</name>
    <name type="ordered locus">c1647</name>
</gene>
<name>MODD_ECOL6</name>
<reference key="1">
    <citation type="journal article" date="1998" name="Infect. Immun.">
        <title>Genomic analysis of a pathogenicity island in uropathogenic Escherichia coli CFT073: distribution of homologous sequences among isolates from patients with pyelonephritis, cystitis, and catheter-associated bacteriuria and from fecal samples.</title>
        <authorList>
            <person name="Guyer D.M."/>
            <person name="Kao J.-S."/>
            <person name="Mobley H.L.T."/>
        </authorList>
    </citation>
    <scope>NUCLEOTIDE SEQUENCE [GENOMIC DNA]</scope>
    <source>
        <strain>CFT073 / ATCC 700928 / UPEC</strain>
    </source>
</reference>
<reference key="2">
    <citation type="journal article" date="2002" name="Proc. Natl. Acad. Sci. U.S.A.">
        <title>Extensive mosaic structure revealed by the complete genome sequence of uropathogenic Escherichia coli.</title>
        <authorList>
            <person name="Welch R.A."/>
            <person name="Burland V."/>
            <person name="Plunkett G. III"/>
            <person name="Redford P."/>
            <person name="Roesch P."/>
            <person name="Rasko D."/>
            <person name="Buckles E.L."/>
            <person name="Liou S.-R."/>
            <person name="Boutin A."/>
            <person name="Hackett J."/>
            <person name="Stroud D."/>
            <person name="Mayhew G.F."/>
            <person name="Rose D.J."/>
            <person name="Zhou S."/>
            <person name="Schwartz D.C."/>
            <person name="Perna N.T."/>
            <person name="Mobley H.L.T."/>
            <person name="Donnenberg M.S."/>
            <person name="Blattner F.R."/>
        </authorList>
    </citation>
    <scope>NUCLEOTIDE SEQUENCE [LARGE SCALE GENOMIC DNA]</scope>
    <source>
        <strain>CFT073 / ATCC 700928 / UPEC</strain>
    </source>
</reference>
<accession>P59245</accession>
<organism>
    <name type="scientific">Escherichia coli O6:H1 (strain CFT073 / ATCC 700928 / UPEC)</name>
    <dbReference type="NCBI Taxonomy" id="199310"/>
    <lineage>
        <taxon>Bacteria</taxon>
        <taxon>Pseudomonadati</taxon>
        <taxon>Pseudomonadota</taxon>
        <taxon>Gammaproteobacteria</taxon>
        <taxon>Enterobacterales</taxon>
        <taxon>Enterobacteriaceae</taxon>
        <taxon>Escherichia</taxon>
    </lineage>
</organism>
<protein>
    <recommendedName>
        <fullName>Putative pyrophosphorylase ModD</fullName>
        <ecNumber>2.4.2.-</ecNumber>
    </recommendedName>
</protein>